<feature type="chain" id="PRO_0000130455" description="Large ribosomal subunit protein uL29">
    <location>
        <begin position="1"/>
        <end position="69"/>
    </location>
</feature>
<proteinExistence type="inferred from homology"/>
<dbReference type="EMBL" id="CP000046">
    <property type="protein sequence ID" value="AAW37106.1"/>
    <property type="molecule type" value="Genomic_DNA"/>
</dbReference>
<dbReference type="RefSeq" id="WP_000644737.1">
    <property type="nucleotide sequence ID" value="NZ_JBGOFO010000004.1"/>
</dbReference>
<dbReference type="SMR" id="Q5HDW6"/>
<dbReference type="GeneID" id="98346554"/>
<dbReference type="KEGG" id="sac:SACOL2231"/>
<dbReference type="HOGENOM" id="CLU_158491_5_2_9"/>
<dbReference type="Proteomes" id="UP000000530">
    <property type="component" value="Chromosome"/>
</dbReference>
<dbReference type="GO" id="GO:0022625">
    <property type="term" value="C:cytosolic large ribosomal subunit"/>
    <property type="evidence" value="ECO:0007669"/>
    <property type="project" value="TreeGrafter"/>
</dbReference>
<dbReference type="GO" id="GO:0003735">
    <property type="term" value="F:structural constituent of ribosome"/>
    <property type="evidence" value="ECO:0007669"/>
    <property type="project" value="InterPro"/>
</dbReference>
<dbReference type="GO" id="GO:0006412">
    <property type="term" value="P:translation"/>
    <property type="evidence" value="ECO:0007669"/>
    <property type="project" value="UniProtKB-UniRule"/>
</dbReference>
<dbReference type="CDD" id="cd00427">
    <property type="entry name" value="Ribosomal_L29_HIP"/>
    <property type="match status" value="1"/>
</dbReference>
<dbReference type="FunFam" id="1.10.287.310:FF:000001">
    <property type="entry name" value="50S ribosomal protein L29"/>
    <property type="match status" value="1"/>
</dbReference>
<dbReference type="Gene3D" id="1.10.287.310">
    <property type="match status" value="1"/>
</dbReference>
<dbReference type="HAMAP" id="MF_00374">
    <property type="entry name" value="Ribosomal_uL29"/>
    <property type="match status" value="1"/>
</dbReference>
<dbReference type="InterPro" id="IPR050063">
    <property type="entry name" value="Ribosomal_protein_uL29"/>
</dbReference>
<dbReference type="InterPro" id="IPR001854">
    <property type="entry name" value="Ribosomal_uL29"/>
</dbReference>
<dbReference type="InterPro" id="IPR036049">
    <property type="entry name" value="Ribosomal_uL29_sf"/>
</dbReference>
<dbReference type="NCBIfam" id="TIGR00012">
    <property type="entry name" value="L29"/>
    <property type="match status" value="1"/>
</dbReference>
<dbReference type="PANTHER" id="PTHR10916">
    <property type="entry name" value="60S RIBOSOMAL PROTEIN L35/50S RIBOSOMAL PROTEIN L29"/>
    <property type="match status" value="1"/>
</dbReference>
<dbReference type="PANTHER" id="PTHR10916:SF0">
    <property type="entry name" value="LARGE RIBOSOMAL SUBUNIT PROTEIN UL29C"/>
    <property type="match status" value="1"/>
</dbReference>
<dbReference type="Pfam" id="PF00831">
    <property type="entry name" value="Ribosomal_L29"/>
    <property type="match status" value="1"/>
</dbReference>
<dbReference type="SUPFAM" id="SSF46561">
    <property type="entry name" value="Ribosomal protein L29 (L29p)"/>
    <property type="match status" value="1"/>
</dbReference>
<evidence type="ECO:0000255" key="1">
    <source>
        <dbReference type="HAMAP-Rule" id="MF_00374"/>
    </source>
</evidence>
<evidence type="ECO:0000305" key="2"/>
<gene>
    <name evidence="1" type="primary">rpmC</name>
    <name type="ordered locus">SACOL2231</name>
</gene>
<organism>
    <name type="scientific">Staphylococcus aureus (strain COL)</name>
    <dbReference type="NCBI Taxonomy" id="93062"/>
    <lineage>
        <taxon>Bacteria</taxon>
        <taxon>Bacillati</taxon>
        <taxon>Bacillota</taxon>
        <taxon>Bacilli</taxon>
        <taxon>Bacillales</taxon>
        <taxon>Staphylococcaceae</taxon>
        <taxon>Staphylococcus</taxon>
    </lineage>
</organism>
<protein>
    <recommendedName>
        <fullName evidence="1">Large ribosomal subunit protein uL29</fullName>
    </recommendedName>
    <alternativeName>
        <fullName evidence="2">50S ribosomal protein L29</fullName>
    </alternativeName>
</protein>
<keyword id="KW-0687">Ribonucleoprotein</keyword>
<keyword id="KW-0689">Ribosomal protein</keyword>
<accession>Q5HDW6</accession>
<reference key="1">
    <citation type="journal article" date="2005" name="J. Bacteriol.">
        <title>Insights on evolution of virulence and resistance from the complete genome analysis of an early methicillin-resistant Staphylococcus aureus strain and a biofilm-producing methicillin-resistant Staphylococcus epidermidis strain.</title>
        <authorList>
            <person name="Gill S.R."/>
            <person name="Fouts D.E."/>
            <person name="Archer G.L."/>
            <person name="Mongodin E.F."/>
            <person name="DeBoy R.T."/>
            <person name="Ravel J."/>
            <person name="Paulsen I.T."/>
            <person name="Kolonay J.F."/>
            <person name="Brinkac L.M."/>
            <person name="Beanan M.J."/>
            <person name="Dodson R.J."/>
            <person name="Daugherty S.C."/>
            <person name="Madupu R."/>
            <person name="Angiuoli S.V."/>
            <person name="Durkin A.S."/>
            <person name="Haft D.H."/>
            <person name="Vamathevan J.J."/>
            <person name="Khouri H."/>
            <person name="Utterback T.R."/>
            <person name="Lee C."/>
            <person name="Dimitrov G."/>
            <person name="Jiang L."/>
            <person name="Qin H."/>
            <person name="Weidman J."/>
            <person name="Tran K."/>
            <person name="Kang K.H."/>
            <person name="Hance I.R."/>
            <person name="Nelson K.E."/>
            <person name="Fraser C.M."/>
        </authorList>
    </citation>
    <scope>NUCLEOTIDE SEQUENCE [LARGE SCALE GENOMIC DNA]</scope>
    <source>
        <strain>COL</strain>
    </source>
</reference>
<comment type="similarity">
    <text evidence="1">Belongs to the universal ribosomal protein uL29 family.</text>
</comment>
<sequence length="69" mass="8090">MKAKEIRDLTTSEIEEQIKSSKEELFNLRFQLATGQLEETARIRTVRKTIARLKTVAREREIEQSKANQ</sequence>
<name>RL29_STAAC</name>